<sequence length="474" mass="54575">MKTKCICELCSCGRHHCPHLPTKIYDKTEKPCLLSEYTENYPCYHSYLPRESFKPRREYQKGSIPMEGLTTSRRDFGPHKVAPVKAHQYDQFVPSEENMDLLTTYKKDYNPYTVCRVDPIKPRDSKYPYSNKMEYLPTYKADYLPWNQPRRQPLRLEHKYQPASVRFDNRTTHQDDYPIKGLVKTVSCKPLAMPKLCNIPLEDVTNYKMSYVAHPVEKRFVHEAEKFRPCEIPFESLTTHKQSYRGLMGEPAKSLKPLARPPGLDMPFSNTTEFRDKYQAWPTPQMFSKAPITYVPPEDSMDLLTTVQAHYTYPKGVPARSCRPAPQIRKSGRFEGSSTTKDDYKQWSSMRTEPVKPIPQLDFPTEPLDCLTTTRAHYVPHPPINTKSCKPHWSGPRGNVPVEGQTTYTISFTPKEMSKCLASYPEPPGYTFEEVDALGHRIYKPVSQAGSQQSSHLSVDDSENPSQRKLEVSA</sequence>
<keyword id="KW-0966">Cell projection</keyword>
<keyword id="KW-0969">Cilium</keyword>
<keyword id="KW-0970">Cilium biogenesis/degradation</keyword>
<keyword id="KW-0963">Cytoplasm</keyword>
<keyword id="KW-0206">Cytoskeleton</keyword>
<keyword id="KW-0282">Flagellum</keyword>
<keyword id="KW-1185">Reference proteome</keyword>
<keyword id="KW-0677">Repeat</keyword>
<accession>Q4R7D3</accession>
<comment type="function">
    <text evidence="1">May play a role in the regulation of cilium length. Stabilizes microtubules at low temperature.</text>
</comment>
<comment type="subunit">
    <text evidence="1">Associates with microtubules via the Mn regions.</text>
</comment>
<comment type="subcellular location">
    <subcellularLocation>
        <location evidence="1">Cytoplasm</location>
        <location evidence="1">Cytoskeleton</location>
        <location evidence="1">Microtubule organizing center</location>
        <location evidence="1">Centrosome</location>
        <location evidence="1">Centriole</location>
    </subcellularLocation>
    <subcellularLocation>
        <location evidence="1">Cytoplasm</location>
        <location evidence="1">Cytoskeleton</location>
        <location evidence="1">Cilium basal body</location>
    </subcellularLocation>
    <subcellularLocation>
        <location evidence="1">Cytoplasm</location>
        <location evidence="1">Cytoskeleton</location>
        <location evidence="1">Cilium axoneme</location>
    </subcellularLocation>
    <subcellularLocation>
        <location evidence="1">Cytoplasm</location>
        <location evidence="1">Cytoskeleton</location>
        <location evidence="1">Microtubule organizing center</location>
        <location evidence="1">Centrosome</location>
    </subcellularLocation>
    <subcellularLocation>
        <location evidence="1">Cytoplasm</location>
        <location evidence="1">Cytoskeleton</location>
        <location evidence="1">Flagellum axoneme</location>
    </subcellularLocation>
    <text evidence="1">In multi-ciliated cells, localizes to the basal bodies and in non-ciliated cells, to the centrosome. In spermatozoa, colocalizes with microtubules along the length of the axoneme from its proximal end to its distal tip and with tubulin at the distal end of the flagellum and at the proximal centriole.</text>
</comment>
<comment type="domain">
    <text evidence="1">The Mn regions are involved in microtubule-binding and stabilization at low temperature. They are required and sufficient for cilium targeting.</text>
</comment>
<comment type="domain">
    <text evidence="1">The N-terminal region (residues 1-29) might play a role in centriole retention.</text>
</comment>
<comment type="similarity">
    <text evidence="3">Belongs to the FAM154 family.</text>
</comment>
<comment type="sequence caution" evidence="3">
    <conflict type="erroneous initiation">
        <sequence resource="EMBL-CDS" id="BAE00989"/>
    </conflict>
    <text>Extended N-terminus.</text>
</comment>
<dbReference type="EMBL" id="AB168886">
    <property type="protein sequence ID" value="BAE00989.1"/>
    <property type="status" value="ALT_INIT"/>
    <property type="molecule type" value="mRNA"/>
</dbReference>
<dbReference type="RefSeq" id="NP_001271034.1">
    <property type="nucleotide sequence ID" value="NM_001284105.1"/>
</dbReference>
<dbReference type="SMR" id="Q4R7D3"/>
<dbReference type="STRING" id="9541.ENSMFAP00000007561"/>
<dbReference type="eggNOG" id="ENOG502QWHB">
    <property type="taxonomic scope" value="Eukaryota"/>
</dbReference>
<dbReference type="Proteomes" id="UP000233100">
    <property type="component" value="Unplaced"/>
</dbReference>
<dbReference type="GO" id="GO:0005879">
    <property type="term" value="C:axonemal microtubule"/>
    <property type="evidence" value="ECO:0000250"/>
    <property type="project" value="UniProtKB"/>
</dbReference>
<dbReference type="GO" id="GO:0005814">
    <property type="term" value="C:centriole"/>
    <property type="evidence" value="ECO:0000250"/>
    <property type="project" value="UniProtKB"/>
</dbReference>
<dbReference type="GO" id="GO:0005813">
    <property type="term" value="C:centrosome"/>
    <property type="evidence" value="ECO:0007669"/>
    <property type="project" value="UniProtKB-SubCell"/>
</dbReference>
<dbReference type="GO" id="GO:0036064">
    <property type="term" value="C:ciliary basal body"/>
    <property type="evidence" value="ECO:0000250"/>
    <property type="project" value="UniProtKB"/>
</dbReference>
<dbReference type="GO" id="GO:0031514">
    <property type="term" value="C:motile cilium"/>
    <property type="evidence" value="ECO:0000250"/>
    <property type="project" value="UniProtKB"/>
</dbReference>
<dbReference type="GO" id="GO:0036126">
    <property type="term" value="C:sperm flagellum"/>
    <property type="evidence" value="ECO:0000250"/>
    <property type="project" value="UniProtKB"/>
</dbReference>
<dbReference type="GO" id="GO:0008017">
    <property type="term" value="F:microtubule binding"/>
    <property type="evidence" value="ECO:0000250"/>
    <property type="project" value="UniProtKB"/>
</dbReference>
<dbReference type="GO" id="GO:0030030">
    <property type="term" value="P:cell projection organization"/>
    <property type="evidence" value="ECO:0007669"/>
    <property type="project" value="UniProtKB-KW"/>
</dbReference>
<dbReference type="GO" id="GO:0070417">
    <property type="term" value="P:cellular response to cold"/>
    <property type="evidence" value="ECO:0000250"/>
    <property type="project" value="UniProtKB"/>
</dbReference>
<dbReference type="GO" id="GO:0009631">
    <property type="term" value="P:cold acclimation"/>
    <property type="evidence" value="ECO:0000250"/>
    <property type="project" value="UniProtKB"/>
</dbReference>
<dbReference type="GO" id="GO:0045724">
    <property type="term" value="P:positive regulation of cilium assembly"/>
    <property type="evidence" value="ECO:0000250"/>
    <property type="project" value="UniProtKB"/>
</dbReference>
<dbReference type="GO" id="GO:0050821">
    <property type="term" value="P:protein stabilization"/>
    <property type="evidence" value="ECO:0000250"/>
    <property type="project" value="UniProtKB"/>
</dbReference>
<dbReference type="InterPro" id="IPR033336">
    <property type="entry name" value="SAXO1/2"/>
</dbReference>
<dbReference type="PANTHER" id="PTHR31516:SF9">
    <property type="entry name" value="STABILIZER OF AXONEMAL MICROTUBULES 1"/>
    <property type="match status" value="1"/>
</dbReference>
<dbReference type="PANTHER" id="PTHR31516">
    <property type="entry name" value="STABILIZER OF AXONEMAL MICROTUBULES 2"/>
    <property type="match status" value="1"/>
</dbReference>
<dbReference type="Pfam" id="PF05217">
    <property type="entry name" value="SAXO1-2"/>
    <property type="match status" value="1"/>
</dbReference>
<proteinExistence type="evidence at transcript level"/>
<reference key="1">
    <citation type="submission" date="2005-06" db="EMBL/GenBank/DDBJ databases">
        <title>DNA sequences of macaque genes expressed in brain or testis and its evolutionary implications.</title>
        <authorList>
            <consortium name="International consortium for macaque cDNA sequencing and analysis"/>
        </authorList>
    </citation>
    <scope>NUCLEOTIDE SEQUENCE [LARGE SCALE MRNA]</scope>
    <source>
        <tissue>Testis</tissue>
    </source>
</reference>
<protein>
    <recommendedName>
        <fullName>Stabilizer of axonemal microtubules 1</fullName>
    </recommendedName>
</protein>
<feature type="chain" id="PRO_0000089738" description="Stabilizer of axonemal microtubules 1">
    <location>
        <begin position="1"/>
        <end position="474"/>
    </location>
</feature>
<feature type="region of interest" description="Mn 1" evidence="1">
    <location>
        <begin position="30"/>
        <end position="64"/>
    </location>
</feature>
<feature type="region of interest" description="Mn 2" evidence="1">
    <location>
        <begin position="65"/>
        <end position="97"/>
    </location>
</feature>
<feature type="region of interest" description="Mn 3" evidence="1">
    <location>
        <begin position="98"/>
        <end position="131"/>
    </location>
</feature>
<feature type="region of interest" description="Mn 4" evidence="1">
    <location>
        <begin position="132"/>
        <end position="165"/>
    </location>
</feature>
<feature type="region of interest" description="Mn 5" evidence="1">
    <location>
        <begin position="166"/>
        <end position="199"/>
    </location>
</feature>
<feature type="region of interest" description="Mn 6" evidence="1">
    <location>
        <begin position="200"/>
        <end position="232"/>
    </location>
</feature>
<feature type="region of interest" description="Mn 7" evidence="1">
    <location>
        <begin position="233"/>
        <end position="266"/>
    </location>
</feature>
<feature type="region of interest" description="Mn 8" evidence="1">
    <location>
        <begin position="267"/>
        <end position="299"/>
    </location>
</feature>
<feature type="region of interest" description="Mn 9" evidence="1">
    <location>
        <begin position="300"/>
        <end position="332"/>
    </location>
</feature>
<feature type="region of interest" description="Disordered" evidence="2">
    <location>
        <begin position="318"/>
        <end position="350"/>
    </location>
</feature>
<feature type="region of interest" description="Mn 10" evidence="1">
    <location>
        <begin position="333"/>
        <end position="366"/>
    </location>
</feature>
<feature type="region of interest" description="Mn 12" evidence="1">
    <location>
        <begin position="367"/>
        <end position="400"/>
    </location>
</feature>
<feature type="region of interest" description="Mn 12" evidence="1">
    <location>
        <begin position="401"/>
        <end position="434"/>
    </location>
</feature>
<feature type="region of interest" description="Disordered" evidence="2">
    <location>
        <begin position="444"/>
        <end position="474"/>
    </location>
</feature>
<feature type="compositionally biased region" description="Polar residues" evidence="2">
    <location>
        <begin position="448"/>
        <end position="457"/>
    </location>
</feature>
<organism>
    <name type="scientific">Macaca fascicularis</name>
    <name type="common">Crab-eating macaque</name>
    <name type="synonym">Cynomolgus monkey</name>
    <dbReference type="NCBI Taxonomy" id="9541"/>
    <lineage>
        <taxon>Eukaryota</taxon>
        <taxon>Metazoa</taxon>
        <taxon>Chordata</taxon>
        <taxon>Craniata</taxon>
        <taxon>Vertebrata</taxon>
        <taxon>Euteleostomi</taxon>
        <taxon>Mammalia</taxon>
        <taxon>Eutheria</taxon>
        <taxon>Euarchontoglires</taxon>
        <taxon>Primates</taxon>
        <taxon>Haplorrhini</taxon>
        <taxon>Catarrhini</taxon>
        <taxon>Cercopithecidae</taxon>
        <taxon>Cercopithecinae</taxon>
        <taxon>Macaca</taxon>
    </lineage>
</organism>
<evidence type="ECO:0000250" key="1">
    <source>
        <dbReference type="UniProtKB" id="Q8IYX7"/>
    </source>
</evidence>
<evidence type="ECO:0000256" key="2">
    <source>
        <dbReference type="SAM" id="MobiDB-lite"/>
    </source>
</evidence>
<evidence type="ECO:0000305" key="3"/>
<gene>
    <name type="primary">SAXO1</name>
    <name type="synonym">FAM154A</name>
    <name type="ORF">QtsA-15565</name>
</gene>
<name>SAXO1_MACFA</name>